<reference key="1">
    <citation type="journal article" date="2022" name="J. Infect. Dis.">
        <title>Exportation of Monkeypox virus from the African continent.</title>
        <authorList>
            <person name="Mauldin M.R."/>
            <person name="McCollum A.M."/>
            <person name="Nakazawa Y.J."/>
            <person name="Mandra A."/>
            <person name="Whitehouse E.R."/>
            <person name="Davidson W."/>
            <person name="Zhao H."/>
            <person name="Gao J."/>
            <person name="Li Y."/>
            <person name="Doty J."/>
            <person name="Yinka-Ogunleye A."/>
            <person name="Akinpelu A."/>
            <person name="Aruna O."/>
            <person name="Naidoo D."/>
            <person name="Lewandowski K."/>
            <person name="Afrough B."/>
            <person name="Graham V."/>
            <person name="Aarons E."/>
            <person name="Hewson R."/>
            <person name="Vipond R."/>
            <person name="Dunning J."/>
            <person name="Chand M."/>
            <person name="Brown C."/>
            <person name="Cohen-Gihon I."/>
            <person name="Erez N."/>
            <person name="Shifman O."/>
            <person name="Israeli O."/>
            <person name="Sharon M."/>
            <person name="Schwartz E."/>
            <person name="Beth-Din A."/>
            <person name="Zvi A."/>
            <person name="Mak T.M."/>
            <person name="Ng Y.K."/>
            <person name="Cui L."/>
            <person name="Lin R.T.P."/>
            <person name="Olson V.A."/>
            <person name="Brooks T."/>
            <person name="Paran N."/>
            <person name="Ihekweazu C."/>
            <person name="Reynolds M.G."/>
        </authorList>
    </citation>
    <scope>NUCLEOTIDE SEQUENCE [LARGE SCALE GENOMIC DNA]</scope>
    <source>
        <strain>MPXV-M5312_HM12_Rivers</strain>
    </source>
</reference>
<proteinExistence type="inferred from homology"/>
<feature type="chain" id="PRO_0000457605" description="Profilin">
    <location>
        <begin position="1"/>
        <end position="133"/>
    </location>
</feature>
<organismHost>
    <name type="scientific">Cynomys gunnisoni</name>
    <name type="common">Gunnison's prairie dog</name>
    <name type="synonym">Spermophilus gunnisoni</name>
    <dbReference type="NCBI Taxonomy" id="45479"/>
</organismHost>
<organismHost>
    <name type="scientific">Cynomys leucurus</name>
    <name type="common">White-tailed prairie dog</name>
    <dbReference type="NCBI Taxonomy" id="99825"/>
</organismHost>
<organismHost>
    <name type="scientific">Cynomys ludovicianus</name>
    <name type="common">Black-tailed prairie dog</name>
    <dbReference type="NCBI Taxonomy" id="45480"/>
</organismHost>
<organismHost>
    <name type="scientific">Cynomys mexicanus</name>
    <name type="common">Mexican prairie dog</name>
    <dbReference type="NCBI Taxonomy" id="99826"/>
</organismHost>
<organismHost>
    <name type="scientific">Cynomys parvidens</name>
    <name type="common">Utah prairie dog</name>
    <dbReference type="NCBI Taxonomy" id="99827"/>
</organismHost>
<organismHost>
    <name type="scientific">Gliridae</name>
    <name type="common">dormice</name>
    <dbReference type="NCBI Taxonomy" id="30650"/>
</organismHost>
<organismHost>
    <name type="scientific">Heliosciurus ruwenzorii</name>
    <name type="common">Ruwenzori sun squirrel</name>
    <dbReference type="NCBI Taxonomy" id="226685"/>
</organismHost>
<organismHost>
    <name type="scientific">Homo sapiens</name>
    <name type="common">Human</name>
    <dbReference type="NCBI Taxonomy" id="9606"/>
</organismHost>
<organismHost>
    <name type="scientific">Mus musculus</name>
    <name type="common">Mouse</name>
    <dbReference type="NCBI Taxonomy" id="10090"/>
</organismHost>
<accession>A0A7H0DND9</accession>
<comment type="similarity">
    <text evidence="1">Belongs to the profilin family.</text>
</comment>
<protein>
    <recommendedName>
        <fullName>Profilin</fullName>
    </recommendedName>
</protein>
<gene>
    <name type="primary">OPG171</name>
    <name type="ORF">MPXVgp152</name>
</gene>
<sequence length="133" mass="15003">MAEWHKIIEDISKNNKFEDAAIVDYKTTKNVLAAIPNRTFAKINPGEVIPLITNHNILKPLIGQKFCIVYTNSLMDENTYAMELLTGYAPVSPIVIARTHTALIFLMGKPTTSRRDVYRTCRDHATRVRATGN</sequence>
<evidence type="ECO:0000305" key="1"/>
<organism>
    <name type="scientific">Monkeypox virus</name>
    <dbReference type="NCBI Taxonomy" id="10244"/>
    <lineage>
        <taxon>Viruses</taxon>
        <taxon>Varidnaviria</taxon>
        <taxon>Bamfordvirae</taxon>
        <taxon>Nucleocytoviricota</taxon>
        <taxon>Pokkesviricetes</taxon>
        <taxon>Chitovirales</taxon>
        <taxon>Poxviridae</taxon>
        <taxon>Chordopoxvirinae</taxon>
        <taxon>Orthopoxvirus</taxon>
    </lineage>
</organism>
<keyword id="KW-0009">Actin-binding</keyword>
<keyword id="KW-1185">Reference proteome</keyword>
<name>PROF_MONPV</name>
<dbReference type="EMBL" id="MT903340">
    <property type="protein sequence ID" value="QNP13022.1"/>
    <property type="molecule type" value="Genomic_DNA"/>
</dbReference>
<dbReference type="RefSeq" id="NP_536579.1">
    <property type="nucleotide sequence ID" value="NC_003310.1"/>
</dbReference>
<dbReference type="RefSeq" id="YP_010377149.1">
    <property type="nucleotide sequence ID" value="NC_063383.1"/>
</dbReference>
<dbReference type="SMR" id="A0A7H0DND9"/>
<dbReference type="GeneID" id="72551563"/>
<dbReference type="GeneID" id="928946"/>
<dbReference type="KEGG" id="vg:928946"/>
<dbReference type="Proteomes" id="UP000516359">
    <property type="component" value="Genome"/>
</dbReference>
<dbReference type="GO" id="GO:0003779">
    <property type="term" value="F:actin binding"/>
    <property type="evidence" value="ECO:0007669"/>
    <property type="project" value="UniProtKB-KW"/>
</dbReference>
<dbReference type="Gene3D" id="3.30.450.30">
    <property type="entry name" value="Dynein light chain 2a, cytoplasmic"/>
    <property type="match status" value="1"/>
</dbReference>
<dbReference type="InterPro" id="IPR048278">
    <property type="entry name" value="PFN"/>
</dbReference>
<dbReference type="InterPro" id="IPR005455">
    <property type="entry name" value="PFN_euk"/>
</dbReference>
<dbReference type="InterPro" id="IPR036140">
    <property type="entry name" value="PFN_sf"/>
</dbReference>
<dbReference type="InterPro" id="IPR027310">
    <property type="entry name" value="Profilin_CS"/>
</dbReference>
<dbReference type="Pfam" id="PF00235">
    <property type="entry name" value="Profilin"/>
    <property type="match status" value="1"/>
</dbReference>
<dbReference type="SMART" id="SM00392">
    <property type="entry name" value="PROF"/>
    <property type="match status" value="1"/>
</dbReference>
<dbReference type="SUPFAM" id="SSF55770">
    <property type="entry name" value="Profilin (actin-binding protein)"/>
    <property type="match status" value="1"/>
</dbReference>
<dbReference type="PROSITE" id="PS00414">
    <property type="entry name" value="PROFILIN"/>
    <property type="match status" value="1"/>
</dbReference>